<comment type="function">
    <text evidence="3">Secreted effector that acts as a pathogen-associated molecular pattern (PAMP) recognized by the plant immune system (PubMed:35152834). Seems not to induce necrosis in Nicotiana benthamiana leaves but significantly improves disease resistance of Arabidopsis thaliana to Hyaloperonospora arabidopsidis and causes an inhibition of plant growth which is typically associated with enhanced immunity when over-expressed in Arabidopsis (PubMed:35152834).</text>
</comment>
<comment type="subcellular location">
    <subcellularLocation>
        <location evidence="6">Secreted</location>
    </subcellularLocation>
</comment>
<comment type="induction">
    <text evidence="3">Highly expressed at multiple time points in both early and late stages almost the entire host infection process.</text>
</comment>
<comment type="domain">
    <text evidence="6">The structure of NLP effectors is remarkably conserved with a high level of conservation of a central region containing the conserved undecapeptide motif AIMYAWYFPKD and heptapeptide motif GHRHDWE.</text>
</comment>
<comment type="similarity">
    <text evidence="5">Belongs to the Necrosis inducing protein (NPP1) family.</text>
</comment>
<proteinExistence type="evidence at transcript level"/>
<feature type="signal peptide" evidence="1">
    <location>
        <begin position="1"/>
        <end position="21"/>
    </location>
</feature>
<feature type="chain" id="PRO_0000456943" description="NLP effector protein 10">
    <location>
        <begin position="22"/>
        <end position="273"/>
    </location>
</feature>
<feature type="short sequence motif" description="Conserved undecapeptide motif" evidence="6">
    <location>
        <begin position="129"/>
        <end position="139"/>
    </location>
</feature>
<feature type="short sequence motif" description="Conserved heptapeptide motif" evidence="6">
    <location>
        <begin position="149"/>
        <end position="155"/>
    </location>
</feature>
<feature type="glycosylation site" description="N-linked (GlcNAc...) asparagine" evidence="2">
    <location>
        <position position="91"/>
    </location>
</feature>
<organism>
    <name type="scientific">Plasmopara viticola</name>
    <name type="common">Downy mildew of grapevine</name>
    <name type="synonym">Botrytis viticola</name>
    <dbReference type="NCBI Taxonomy" id="143451"/>
    <lineage>
        <taxon>Eukaryota</taxon>
        <taxon>Sar</taxon>
        <taxon>Stramenopiles</taxon>
        <taxon>Oomycota</taxon>
        <taxon>Peronosporales</taxon>
        <taxon>Peronosporaceae</taxon>
        <taxon>Plasmopara</taxon>
    </lineage>
</organism>
<name>NLP10_PLAVT</name>
<dbReference type="EMBL" id="MW812347">
    <property type="protein sequence ID" value="UVH27393.1"/>
    <property type="molecule type" value="mRNA"/>
</dbReference>
<dbReference type="SMR" id="P9WER9"/>
<dbReference type="GO" id="GO:0005576">
    <property type="term" value="C:extracellular region"/>
    <property type="evidence" value="ECO:0007669"/>
    <property type="project" value="UniProtKB-SubCell"/>
</dbReference>
<dbReference type="InterPro" id="IPR008701">
    <property type="entry name" value="NPP1"/>
</dbReference>
<dbReference type="PANTHER" id="PTHR33657">
    <property type="entry name" value="DOMAIN PROTEIN, PUTATIVE (AFU_ORTHOLOGUE AFUA_5G00600)-RELATED"/>
    <property type="match status" value="1"/>
</dbReference>
<dbReference type="PANTHER" id="PTHR33657:SF8">
    <property type="entry name" value="DOMAIN PROTEIN, PUTATIVE (AFU_ORTHOLOGUE AFUA_5G00600)-RELATED"/>
    <property type="match status" value="1"/>
</dbReference>
<dbReference type="Pfam" id="PF05630">
    <property type="entry name" value="NPP1"/>
    <property type="match status" value="1"/>
</dbReference>
<protein>
    <recommendedName>
        <fullName evidence="4">NLP effector protein 10</fullName>
    </recommendedName>
    <alternativeName>
        <fullName evidence="4">Nep1-like protein 10</fullName>
    </alternativeName>
</protein>
<reference key="1">
    <citation type="journal article" date="2022" name="Plant Signal. Behav.">
        <title>Functional analysis of the Nep1-like proteins from Plasmopara viticola.</title>
        <authorList>
            <person name="Xiang J."/>
            <person name="Cheng J."/>
            <person name="Wei L."/>
            <person name="Li M."/>
            <person name="Wu J."/>
        </authorList>
    </citation>
    <scope>NUCLEOTIDE SEQUENCE [MRNA]</scope>
    <scope>FUNCTION</scope>
    <scope>DOMAIN</scope>
    <scope>INDUCTION</scope>
</reference>
<gene>
    <name evidence="4" type="primary">NLP10</name>
</gene>
<accession>P9WER9</accession>
<sequence length="273" mass="31264">MKLPTFLIGFVALLVTSNGSARYVYREDPDDSADPPNPGALHANPILIDVDDVQPFPQPRAITDSQKSALVYKPRLYIKSGCHPYPAVQANGSLSDGLQWKNFLRSPCPGSPKGSQVYSRSDWYEGKWAIMYAWYLPRALDRVTWLVNGHRHYWLWVVVWTDSPDPKTSTLLATSMPGVANNIHKYYPPKSKYVIREKTLKVKSYQNHILFIKHGLELTDRAGDFQDLVTWEQMTDEARAALSTFHRPEHAANPPLQDKRFYEVLEKAYPFDR</sequence>
<evidence type="ECO:0000255" key="1"/>
<evidence type="ECO:0000255" key="2">
    <source>
        <dbReference type="PROSITE-ProRule" id="PRU00498"/>
    </source>
</evidence>
<evidence type="ECO:0000269" key="3">
    <source>
    </source>
</evidence>
<evidence type="ECO:0000303" key="4">
    <source>
    </source>
</evidence>
<evidence type="ECO:0000305" key="5"/>
<evidence type="ECO:0000305" key="6">
    <source>
    </source>
</evidence>
<keyword id="KW-0325">Glycoprotein</keyword>
<keyword id="KW-0964">Secreted</keyword>
<keyword id="KW-0732">Signal</keyword>
<keyword id="KW-0843">Virulence</keyword>